<comment type="function">
    <text evidence="1">May play a role in growth regulation. Is associated with G2/M phase arrest in response to DNA damage. May be an intermediate by which p53 mediates its role as an inhibitor of cellular proliferation (By similarity).</text>
</comment>
<comment type="interaction">
    <interactant intactId="EBI-3905829">
        <id>P51959</id>
    </interactant>
    <interactant intactId="EBI-741724">
        <id>Q8NA61</id>
        <label>CBY2</label>
    </interactant>
    <organismsDiffer>false</organismsDiffer>
    <experiments>3</experiments>
</comment>
<comment type="interaction">
    <interactant intactId="EBI-3905829">
        <id>P51959</id>
    </interactant>
    <interactant intactId="EBI-11977221">
        <id>Q86Z20</id>
        <label>CCDC125</label>
    </interactant>
    <organismsDiffer>false</organismsDiffer>
    <experiments>3</experiments>
</comment>
<comment type="interaction">
    <interactant intactId="EBI-3905829">
        <id>P51959</id>
    </interactant>
    <interactant intactId="EBI-1052570">
        <id>O95995</id>
        <label>GAS8</label>
    </interactant>
    <organismsDiffer>false</organismsDiffer>
    <experiments>3</experiments>
</comment>
<comment type="interaction">
    <interactant intactId="EBI-3905829">
        <id>P51959</id>
    </interactant>
    <interactant intactId="EBI-2549423">
        <id>Q6NT76</id>
        <label>HMBOX1</label>
    </interactant>
    <organismsDiffer>false</organismsDiffer>
    <experiments>3</experiments>
</comment>
<comment type="interaction">
    <interactant intactId="EBI-3905829">
        <id>P51959</id>
    </interactant>
    <interactant intactId="EBI-466029">
        <id>P42858</id>
        <label>HTT</label>
    </interactant>
    <organismsDiffer>false</organismsDiffer>
    <experiments>3</experiments>
</comment>
<comment type="interaction">
    <interactant intactId="EBI-3905829">
        <id>P51959</id>
    </interactant>
    <interactant intactId="EBI-10171697">
        <id>Q6A162</id>
        <label>KRT40</label>
    </interactant>
    <organismsDiffer>false</organismsDiffer>
    <experiments>3</experiments>
</comment>
<comment type="interaction">
    <interactant intactId="EBI-3905829">
        <id>P51959</id>
    </interactant>
    <interactant intactId="EBI-10172290">
        <id>P60409</id>
        <label>KRTAP10-7</label>
    </interactant>
    <organismsDiffer>false</organismsDiffer>
    <experiments>3</experiments>
</comment>
<comment type="interaction">
    <interactant intactId="EBI-3905829">
        <id>P51959</id>
    </interactant>
    <interactant intactId="EBI-741037">
        <id>Q9BRK4</id>
        <label>LZTS2</label>
    </interactant>
    <organismsDiffer>false</organismsDiffer>
    <experiments>3</experiments>
</comment>
<comment type="interaction">
    <interactant intactId="EBI-3905829">
        <id>P51959</id>
    </interactant>
    <interactant intactId="EBI-741896">
        <id>Q9P286</id>
        <label>PAK5</label>
    </interactant>
    <organismsDiffer>false</organismsDiffer>
    <experiments>4</experiments>
</comment>
<comment type="interaction">
    <interactant intactId="EBI-3905829">
        <id>P51959</id>
    </interactant>
    <interactant intactId="EBI-302345">
        <id>Q8ND90</id>
        <label>PNMA1</label>
    </interactant>
    <organismsDiffer>false</organismsDiffer>
    <experiments>3</experiments>
</comment>
<comment type="interaction">
    <interactant intactId="EBI-3905829">
        <id>P51959</id>
    </interactant>
    <interactant intactId="EBI-302388">
        <id>P30153</id>
        <label>PPP2R1A</label>
    </interactant>
    <organismsDiffer>false</organismsDiffer>
    <experiments>2</experiments>
</comment>
<comment type="interaction">
    <interactant intactId="EBI-3905829">
        <id>P51959</id>
    </interactant>
    <interactant intactId="EBI-740322">
        <id>Q93062</id>
        <label>RBPMS</label>
    </interactant>
    <organismsDiffer>false</organismsDiffer>
    <experiments>3</experiments>
</comment>
<comment type="interaction">
    <interactant intactId="EBI-3905829">
        <id>P51959</id>
    </interactant>
    <interactant intactId="EBI-1105213">
        <id>Q9UBB9</id>
        <label>TFIP11</label>
    </interactant>
    <organismsDiffer>false</organismsDiffer>
    <experiments>3</experiments>
</comment>
<comment type="interaction">
    <interactant intactId="EBI-3905829">
        <id>P51959</id>
    </interactant>
    <interactant intactId="EBI-357849">
        <id>Q15025</id>
        <label>TNIP1</label>
    </interactant>
    <organismsDiffer>false</organismsDiffer>
    <experiments>8</experiments>
</comment>
<comment type="subcellular location">
    <subcellularLocation>
        <location evidence="2">Nucleus</location>
    </subcellularLocation>
    <text>DNA replication foci after DNA damage.</text>
</comment>
<comment type="alternative products">
    <event type="alternative splicing"/>
    <isoform>
        <id>P51959-1</id>
        <name>1</name>
        <sequence type="displayed"/>
    </isoform>
    <isoform>
        <id>P51959-2</id>
        <name>2</name>
        <sequence type="described" ref="VSP_056943"/>
    </isoform>
</comment>
<comment type="tissue specificity">
    <text>High levels in skeletal muscle, ovary, kidney and colon.</text>
</comment>
<comment type="developmental stage">
    <text>Very low levels in normal cells during G1 phase, which increase as cells enter the S phase and stay high throughout the S and G2/M phases. In breast cancer cells consistent high levels are found throughout the cell cycle.</text>
</comment>
<comment type="induction">
    <text>Activated in breast and prostate cancer cells. Activated by actinomycin-D induced DNA damage.</text>
</comment>
<comment type="similarity">
    <text evidence="5">Belongs to the cyclin family. Cyclin G subfamily.</text>
</comment>
<comment type="sequence caution" evidence="5">
    <conflict type="erroneous initiation">
        <sequence resource="EMBL-CDS" id="AAB03903"/>
    </conflict>
</comment>
<comment type="sequence caution" evidence="5">
    <conflict type="erroneous initiation">
        <sequence resource="EMBL-CDS" id="CAA54821"/>
    </conflict>
</comment>
<name>CCNG1_HUMAN</name>
<accession>P51959</accession>
<accession>B2R7B2</accession>
<accession>B4DLW7</accession>
<accession>D3DQK7</accession>
<accession>Q15757</accession>
<accession>Q96L32</accession>
<dbReference type="EMBL" id="L49504">
    <property type="protein sequence ID" value="AAC41977.1"/>
    <property type="molecule type" value="mRNA"/>
</dbReference>
<dbReference type="EMBL" id="U47413">
    <property type="protein sequence ID" value="AAC50688.1"/>
    <property type="molecule type" value="mRNA"/>
</dbReference>
<dbReference type="EMBL" id="D86077">
    <property type="protein sequence ID" value="BAA13007.1"/>
    <property type="molecule type" value="Genomic_DNA"/>
</dbReference>
<dbReference type="EMBL" id="D78341">
    <property type="protein sequence ID" value="BAA11353.1"/>
    <property type="molecule type" value="mRNA"/>
</dbReference>
<dbReference type="EMBL" id="U53328">
    <property type="protein sequence ID" value="AAB03903.1"/>
    <property type="status" value="ALT_INIT"/>
    <property type="molecule type" value="mRNA"/>
</dbReference>
<dbReference type="EMBL" id="AK297190">
    <property type="protein sequence ID" value="BAG59679.1"/>
    <property type="molecule type" value="mRNA"/>
</dbReference>
<dbReference type="EMBL" id="AK312913">
    <property type="protein sequence ID" value="BAG35759.1"/>
    <property type="molecule type" value="mRNA"/>
</dbReference>
<dbReference type="EMBL" id="AK316234">
    <property type="protein sequence ID" value="BAH14605.1"/>
    <property type="molecule type" value="mRNA"/>
</dbReference>
<dbReference type="EMBL" id="BT007134">
    <property type="protein sequence ID" value="AAP35798.1"/>
    <property type="molecule type" value="mRNA"/>
</dbReference>
<dbReference type="EMBL" id="AY791292">
    <property type="protein sequence ID" value="AAV40836.1"/>
    <property type="molecule type" value="Genomic_DNA"/>
</dbReference>
<dbReference type="EMBL" id="AC112205">
    <property type="status" value="NOT_ANNOTATED_CDS"/>
    <property type="molecule type" value="Genomic_DNA"/>
</dbReference>
<dbReference type="EMBL" id="CH471062">
    <property type="protein sequence ID" value="EAW61528.1"/>
    <property type="molecule type" value="Genomic_DNA"/>
</dbReference>
<dbReference type="EMBL" id="CH471062">
    <property type="protein sequence ID" value="EAW61529.1"/>
    <property type="molecule type" value="Genomic_DNA"/>
</dbReference>
<dbReference type="EMBL" id="CH471062">
    <property type="protein sequence ID" value="EAW61530.1"/>
    <property type="molecule type" value="Genomic_DNA"/>
</dbReference>
<dbReference type="EMBL" id="BC000196">
    <property type="protein sequence ID" value="AAH00196.1"/>
    <property type="molecule type" value="mRNA"/>
</dbReference>
<dbReference type="EMBL" id="BC007093">
    <property type="protein sequence ID" value="AAH07093.1"/>
    <property type="molecule type" value="mRNA"/>
</dbReference>
<dbReference type="EMBL" id="X77794">
    <property type="protein sequence ID" value="CAA54821.1"/>
    <property type="status" value="ALT_INIT"/>
    <property type="molecule type" value="mRNA"/>
</dbReference>
<dbReference type="CCDS" id="CCDS4360.1">
    <molecule id="P51959-1"/>
</dbReference>
<dbReference type="CCDS" id="CCDS93817.1">
    <molecule id="P51959-2"/>
</dbReference>
<dbReference type="PIR" id="G02401">
    <property type="entry name" value="G02401"/>
</dbReference>
<dbReference type="RefSeq" id="NP_001350944.1">
    <molecule id="P51959-1"/>
    <property type="nucleotide sequence ID" value="NM_001364015.1"/>
</dbReference>
<dbReference type="RefSeq" id="NP_001350951.1">
    <molecule id="P51959-2"/>
    <property type="nucleotide sequence ID" value="NM_001364022.1"/>
</dbReference>
<dbReference type="RefSeq" id="NP_001350952.1">
    <molecule id="P51959-2"/>
    <property type="nucleotide sequence ID" value="NM_001364023.1"/>
</dbReference>
<dbReference type="RefSeq" id="NP_004051.1">
    <molecule id="P51959-1"/>
    <property type="nucleotide sequence ID" value="NM_004060.4"/>
</dbReference>
<dbReference type="RefSeq" id="NP_954854.1">
    <molecule id="P51959-1"/>
    <property type="nucleotide sequence ID" value="NM_199246.2"/>
</dbReference>
<dbReference type="SMR" id="P51959"/>
<dbReference type="BioGRID" id="107340">
    <property type="interactions" value="51"/>
</dbReference>
<dbReference type="ELM" id="P51959"/>
<dbReference type="FunCoup" id="P51959">
    <property type="interactions" value="2692"/>
</dbReference>
<dbReference type="IntAct" id="P51959">
    <property type="interactions" value="32"/>
</dbReference>
<dbReference type="MINT" id="P51959"/>
<dbReference type="STRING" id="9606.ENSP00000344635"/>
<dbReference type="iPTMnet" id="P51959"/>
<dbReference type="PhosphoSitePlus" id="P51959"/>
<dbReference type="BioMuta" id="CCNG1"/>
<dbReference type="DMDM" id="2506334"/>
<dbReference type="jPOST" id="P51959"/>
<dbReference type="MassIVE" id="P51959"/>
<dbReference type="PaxDb" id="9606-ENSP00000344635"/>
<dbReference type="PeptideAtlas" id="P51959"/>
<dbReference type="ProteomicsDB" id="4569"/>
<dbReference type="ProteomicsDB" id="56462">
    <molecule id="P51959-1"/>
</dbReference>
<dbReference type="Antibodypedia" id="28603">
    <property type="antibodies" value="306 antibodies from 30 providers"/>
</dbReference>
<dbReference type="DNASU" id="900"/>
<dbReference type="Ensembl" id="ENST00000340828.7">
    <molecule id="P51959-1"/>
    <property type="protein sequence ID" value="ENSP00000344635.2"/>
    <property type="gene ID" value="ENSG00000113328.21"/>
</dbReference>
<dbReference type="Ensembl" id="ENST00000512163.5">
    <molecule id="P51959-2"/>
    <property type="protein sequence ID" value="ENSP00000424315.1"/>
    <property type="gene ID" value="ENSG00000113328.21"/>
</dbReference>
<dbReference type="Ensembl" id="ENST00000850590.1">
    <molecule id="P51959-1"/>
    <property type="protein sequence ID" value="ENSP00000520877.1"/>
    <property type="gene ID" value="ENSG00000113328.21"/>
</dbReference>
<dbReference type="GeneID" id="900"/>
<dbReference type="KEGG" id="hsa:900"/>
<dbReference type="MANE-Select" id="ENST00000340828.7">
    <property type="protein sequence ID" value="ENSP00000344635.2"/>
    <property type="RefSeq nucleotide sequence ID" value="NM_004060.4"/>
    <property type="RefSeq protein sequence ID" value="NP_004051.1"/>
</dbReference>
<dbReference type="UCSC" id="uc003lzb.4">
    <molecule id="P51959-1"/>
    <property type="organism name" value="human"/>
</dbReference>
<dbReference type="AGR" id="HGNC:1592"/>
<dbReference type="CTD" id="900"/>
<dbReference type="DisGeNET" id="900"/>
<dbReference type="GeneCards" id="CCNG1"/>
<dbReference type="HGNC" id="HGNC:1592">
    <property type="gene designation" value="CCNG1"/>
</dbReference>
<dbReference type="HPA" id="ENSG00000113328">
    <property type="expression patterns" value="Low tissue specificity"/>
</dbReference>
<dbReference type="MIM" id="601578">
    <property type="type" value="gene"/>
</dbReference>
<dbReference type="neXtProt" id="NX_P51959"/>
<dbReference type="OpenTargets" id="ENSG00000113328"/>
<dbReference type="PharmGKB" id="PA26157"/>
<dbReference type="VEuPathDB" id="HostDB:ENSG00000113328"/>
<dbReference type="eggNOG" id="KOG0653">
    <property type="taxonomic scope" value="Eukaryota"/>
</dbReference>
<dbReference type="GeneTree" id="ENSGT00940000154726"/>
<dbReference type="HOGENOM" id="CLU_062642_0_2_1"/>
<dbReference type="InParanoid" id="P51959"/>
<dbReference type="OMA" id="CFEAQEE"/>
<dbReference type="OrthoDB" id="769138at2759"/>
<dbReference type="PAN-GO" id="P51959">
    <property type="GO annotations" value="6 GO annotations based on evolutionary models"/>
</dbReference>
<dbReference type="PhylomeDB" id="P51959"/>
<dbReference type="TreeFam" id="TF101007"/>
<dbReference type="PathwayCommons" id="P51959"/>
<dbReference type="Reactome" id="R-HSA-6804757">
    <property type="pathway name" value="Regulation of TP53 Degradation"/>
</dbReference>
<dbReference type="SignaLink" id="P51959"/>
<dbReference type="SIGNOR" id="P51959"/>
<dbReference type="BioGRID-ORCS" id="900">
    <property type="hits" value="16 hits in 1158 CRISPR screens"/>
</dbReference>
<dbReference type="ChiTaRS" id="CCNG1">
    <property type="organism name" value="human"/>
</dbReference>
<dbReference type="GeneWiki" id="CCNG1"/>
<dbReference type="GenomeRNAi" id="900"/>
<dbReference type="Pharos" id="P51959">
    <property type="development level" value="Tbio"/>
</dbReference>
<dbReference type="PRO" id="PR:P51959"/>
<dbReference type="Proteomes" id="UP000005640">
    <property type="component" value="Chromosome 5"/>
</dbReference>
<dbReference type="RNAct" id="P51959">
    <property type="molecule type" value="protein"/>
</dbReference>
<dbReference type="Bgee" id="ENSG00000113328">
    <property type="expression patterns" value="Expressed in jejunal mucosa and 217 other cell types or tissues"/>
</dbReference>
<dbReference type="ExpressionAtlas" id="P51959">
    <property type="expression patterns" value="baseline and differential"/>
</dbReference>
<dbReference type="GO" id="GO:0000307">
    <property type="term" value="C:cyclin-dependent protein kinase holoenzyme complex"/>
    <property type="evidence" value="ECO:0000318"/>
    <property type="project" value="GO_Central"/>
</dbReference>
<dbReference type="GO" id="GO:0005737">
    <property type="term" value="C:cytoplasm"/>
    <property type="evidence" value="ECO:0000318"/>
    <property type="project" value="GO_Central"/>
</dbReference>
<dbReference type="GO" id="GO:0005654">
    <property type="term" value="C:nucleoplasm"/>
    <property type="evidence" value="ECO:0000304"/>
    <property type="project" value="Reactome"/>
</dbReference>
<dbReference type="GO" id="GO:0005634">
    <property type="term" value="C:nucleus"/>
    <property type="evidence" value="ECO:0000318"/>
    <property type="project" value="GO_Central"/>
</dbReference>
<dbReference type="GO" id="GO:0016538">
    <property type="term" value="F:cyclin-dependent protein serine/threonine kinase regulator activity"/>
    <property type="evidence" value="ECO:0000318"/>
    <property type="project" value="GO_Central"/>
</dbReference>
<dbReference type="GO" id="GO:0051301">
    <property type="term" value="P:cell division"/>
    <property type="evidence" value="ECO:0007669"/>
    <property type="project" value="UniProtKB-KW"/>
</dbReference>
<dbReference type="GO" id="GO:0000082">
    <property type="term" value="P:G1/S transition of mitotic cell cycle"/>
    <property type="evidence" value="ECO:0000318"/>
    <property type="project" value="GO_Central"/>
</dbReference>
<dbReference type="GO" id="GO:0000079">
    <property type="term" value="P:regulation of cyclin-dependent protein serine/threonine kinase activity"/>
    <property type="evidence" value="ECO:0000304"/>
    <property type="project" value="ProtInc"/>
</dbReference>
<dbReference type="CDD" id="cd20583">
    <property type="entry name" value="CYCLIN_CCNG1"/>
    <property type="match status" value="1"/>
</dbReference>
<dbReference type="FunFam" id="1.10.472.10:FF:000006">
    <property type="entry name" value="Cyclin I"/>
    <property type="match status" value="1"/>
</dbReference>
<dbReference type="Gene3D" id="1.10.472.10">
    <property type="entry name" value="Cyclin-like"/>
    <property type="match status" value="2"/>
</dbReference>
<dbReference type="InterPro" id="IPR039361">
    <property type="entry name" value="Cyclin"/>
</dbReference>
<dbReference type="InterPro" id="IPR013763">
    <property type="entry name" value="Cyclin-like_dom"/>
</dbReference>
<dbReference type="InterPro" id="IPR036915">
    <property type="entry name" value="Cyclin-like_sf"/>
</dbReference>
<dbReference type="InterPro" id="IPR006671">
    <property type="entry name" value="Cyclin_N"/>
</dbReference>
<dbReference type="PANTHER" id="PTHR10177">
    <property type="entry name" value="CYCLINS"/>
    <property type="match status" value="1"/>
</dbReference>
<dbReference type="Pfam" id="PF00134">
    <property type="entry name" value="Cyclin_N"/>
    <property type="match status" value="1"/>
</dbReference>
<dbReference type="SMART" id="SM00385">
    <property type="entry name" value="CYCLIN"/>
    <property type="match status" value="1"/>
</dbReference>
<dbReference type="SUPFAM" id="SSF47954">
    <property type="entry name" value="Cyclin-like"/>
    <property type="match status" value="1"/>
</dbReference>
<feature type="chain" id="PRO_0000080465" description="Cyclin-G1">
    <location>
        <begin position="1"/>
        <end position="295"/>
    </location>
</feature>
<feature type="splice variant" id="VSP_056943" description="In isoform 2." evidence="4">
    <location>
        <begin position="1"/>
        <end position="134"/>
    </location>
</feature>
<feature type="sequence variant" id="VAR_021079" description="In dbSNP:rs2069352." evidence="3">
    <original>N</original>
    <variation>H</variation>
    <location>
        <position position="178"/>
    </location>
</feature>
<feature type="sequence variant" id="VAR_021080" description="In dbSNP:rs11541970." evidence="3">
    <original>F</original>
    <variation>L</variation>
    <location>
        <position position="179"/>
    </location>
</feature>
<feature type="sequence conflict" description="In Ref. 4; AAB03903." evidence="5" ref="4">
    <original>R</original>
    <variation>M</variation>
    <location>
        <position position="128"/>
    </location>
</feature>
<feature type="sequence conflict" description="In Ref. 10; AAH07093." evidence="5" ref="10">
    <original>K</original>
    <variation>E</variation>
    <location>
        <position position="256"/>
    </location>
</feature>
<feature type="sequence conflict" description="In Ref. 4; AAB03903." evidence="5" ref="4">
    <original>RQLKHSYYRITHLPTIPEMVP</original>
    <variation>LKWSLNWIITAPKNFSEAFLHNLVLWIP</variation>
    <location>
        <begin position="275"/>
        <end position="295"/>
    </location>
</feature>
<protein>
    <recommendedName>
        <fullName>Cyclin-G1</fullName>
        <shortName>Cyclin-G</shortName>
    </recommendedName>
</protein>
<gene>
    <name type="primary">CCNG1</name>
    <name type="synonym">CCNG</name>
    <name type="synonym">CYCG1</name>
</gene>
<proteinExistence type="evidence at protein level"/>
<reference key="1">
    <citation type="journal article" date="1996" name="J. Biol. Chem.">
        <title>Cyclin G1 and cyclin G2 comprise a new family of cyclins with contrasting tissue-specific and cell cycle-regulated expression.</title>
        <authorList>
            <person name="Horne M.C."/>
            <person name="Goolsby G.L."/>
            <person name="Donaldson K.L."/>
            <person name="Tran D."/>
            <person name="Neubauer M.G."/>
            <person name="Wahl A.F."/>
        </authorList>
    </citation>
    <scope>NUCLEOTIDE SEQUENCE [MRNA] (ISOFORM 1)</scope>
</reference>
<reference key="2">
    <citation type="journal article" date="1996" name="Oncogene">
        <title>Characterisation of human cyclin G1 and G2: DNA damage inducible genes.</title>
        <authorList>
            <person name="Bates S.A."/>
            <person name="Rowan S."/>
            <person name="Vousden K.H."/>
        </authorList>
    </citation>
    <scope>NUCLEOTIDE SEQUENCE [MRNA] (ISOFORM 1)</scope>
    <source>
        <tissue>Fetal spleen</tissue>
    </source>
</reference>
<reference key="3">
    <citation type="journal article" date="1996" name="Genomics">
        <title>Structure and chromosomal assignment of the human cyclin G gene.</title>
        <authorList>
            <person name="Endo Y."/>
            <person name="Fujita T."/>
            <person name="Tamura K."/>
            <person name="Tsuruga H."/>
            <person name="Nojima H."/>
        </authorList>
    </citation>
    <scope>NUCLEOTIDE SEQUENCE [GENOMIC DNA / MRNA] (ISOFORM 1)</scope>
</reference>
<reference key="4">
    <citation type="journal article" date="1999" name="J. Biol. Chem.">
        <title>Altered regulation of cyclin G in human breast cancer and its specific localization at replication foci in response to DNA damage in p53+/+ cells.</title>
        <authorList>
            <person name="Reimer C.L."/>
            <person name="Borras A.M."/>
            <person name="Kurdistani S.K."/>
            <person name="Garreau J.R."/>
            <person name="Chung M."/>
            <person name="Aaronson S.A."/>
            <person name="Lee S.W."/>
        </authorList>
    </citation>
    <scope>NUCLEOTIDE SEQUENCE [MRNA] (ISOFORM 1)</scope>
    <scope>SUBCELLULAR LOCATION</scope>
    <source>
        <tissue>Mammary gland</tissue>
    </source>
</reference>
<reference key="5">
    <citation type="journal article" date="2004" name="Nat. Genet.">
        <title>Complete sequencing and characterization of 21,243 full-length human cDNAs.</title>
        <authorList>
            <person name="Ota T."/>
            <person name="Suzuki Y."/>
            <person name="Nishikawa T."/>
            <person name="Otsuki T."/>
            <person name="Sugiyama T."/>
            <person name="Irie R."/>
            <person name="Wakamatsu A."/>
            <person name="Hayashi K."/>
            <person name="Sato H."/>
            <person name="Nagai K."/>
            <person name="Kimura K."/>
            <person name="Makita H."/>
            <person name="Sekine M."/>
            <person name="Obayashi M."/>
            <person name="Nishi T."/>
            <person name="Shibahara T."/>
            <person name="Tanaka T."/>
            <person name="Ishii S."/>
            <person name="Yamamoto J."/>
            <person name="Saito K."/>
            <person name="Kawai Y."/>
            <person name="Isono Y."/>
            <person name="Nakamura Y."/>
            <person name="Nagahari K."/>
            <person name="Murakami K."/>
            <person name="Yasuda T."/>
            <person name="Iwayanagi T."/>
            <person name="Wagatsuma M."/>
            <person name="Shiratori A."/>
            <person name="Sudo H."/>
            <person name="Hosoiri T."/>
            <person name="Kaku Y."/>
            <person name="Kodaira H."/>
            <person name="Kondo H."/>
            <person name="Sugawara M."/>
            <person name="Takahashi M."/>
            <person name="Kanda K."/>
            <person name="Yokoi T."/>
            <person name="Furuya T."/>
            <person name="Kikkawa E."/>
            <person name="Omura Y."/>
            <person name="Abe K."/>
            <person name="Kamihara K."/>
            <person name="Katsuta N."/>
            <person name="Sato K."/>
            <person name="Tanikawa M."/>
            <person name="Yamazaki M."/>
            <person name="Ninomiya K."/>
            <person name="Ishibashi T."/>
            <person name="Yamashita H."/>
            <person name="Murakawa K."/>
            <person name="Fujimori K."/>
            <person name="Tanai H."/>
            <person name="Kimata M."/>
            <person name="Watanabe M."/>
            <person name="Hiraoka S."/>
            <person name="Chiba Y."/>
            <person name="Ishida S."/>
            <person name="Ono Y."/>
            <person name="Takiguchi S."/>
            <person name="Watanabe S."/>
            <person name="Yosida M."/>
            <person name="Hotuta T."/>
            <person name="Kusano J."/>
            <person name="Kanehori K."/>
            <person name="Takahashi-Fujii A."/>
            <person name="Hara H."/>
            <person name="Tanase T.-O."/>
            <person name="Nomura Y."/>
            <person name="Togiya S."/>
            <person name="Komai F."/>
            <person name="Hara R."/>
            <person name="Takeuchi K."/>
            <person name="Arita M."/>
            <person name="Imose N."/>
            <person name="Musashino K."/>
            <person name="Yuuki H."/>
            <person name="Oshima A."/>
            <person name="Sasaki N."/>
            <person name="Aotsuka S."/>
            <person name="Yoshikawa Y."/>
            <person name="Matsunawa H."/>
            <person name="Ichihara T."/>
            <person name="Shiohata N."/>
            <person name="Sano S."/>
            <person name="Moriya S."/>
            <person name="Momiyama H."/>
            <person name="Satoh N."/>
            <person name="Takami S."/>
            <person name="Terashima Y."/>
            <person name="Suzuki O."/>
            <person name="Nakagawa S."/>
            <person name="Senoh A."/>
            <person name="Mizoguchi H."/>
            <person name="Goto Y."/>
            <person name="Shimizu F."/>
            <person name="Wakebe H."/>
            <person name="Hishigaki H."/>
            <person name="Watanabe T."/>
            <person name="Sugiyama A."/>
            <person name="Takemoto M."/>
            <person name="Kawakami B."/>
            <person name="Yamazaki M."/>
            <person name="Watanabe K."/>
            <person name="Kumagai A."/>
            <person name="Itakura S."/>
            <person name="Fukuzumi Y."/>
            <person name="Fujimori Y."/>
            <person name="Komiyama M."/>
            <person name="Tashiro H."/>
            <person name="Tanigami A."/>
            <person name="Fujiwara T."/>
            <person name="Ono T."/>
            <person name="Yamada K."/>
            <person name="Fujii Y."/>
            <person name="Ozaki K."/>
            <person name="Hirao M."/>
            <person name="Ohmori Y."/>
            <person name="Kawabata A."/>
            <person name="Hikiji T."/>
            <person name="Kobatake N."/>
            <person name="Inagaki H."/>
            <person name="Ikema Y."/>
            <person name="Okamoto S."/>
            <person name="Okitani R."/>
            <person name="Kawakami T."/>
            <person name="Noguchi S."/>
            <person name="Itoh T."/>
            <person name="Shigeta K."/>
            <person name="Senba T."/>
            <person name="Matsumura K."/>
            <person name="Nakajima Y."/>
            <person name="Mizuno T."/>
            <person name="Morinaga M."/>
            <person name="Sasaki M."/>
            <person name="Togashi T."/>
            <person name="Oyama M."/>
            <person name="Hata H."/>
            <person name="Watanabe M."/>
            <person name="Komatsu T."/>
            <person name="Mizushima-Sugano J."/>
            <person name="Satoh T."/>
            <person name="Shirai Y."/>
            <person name="Takahashi Y."/>
            <person name="Nakagawa K."/>
            <person name="Okumura K."/>
            <person name="Nagase T."/>
            <person name="Nomura N."/>
            <person name="Kikuchi H."/>
            <person name="Masuho Y."/>
            <person name="Yamashita R."/>
            <person name="Nakai K."/>
            <person name="Yada T."/>
            <person name="Nakamura Y."/>
            <person name="Ohara O."/>
            <person name="Isogai T."/>
            <person name="Sugano S."/>
        </authorList>
    </citation>
    <scope>NUCLEOTIDE SEQUENCE [LARGE SCALE MRNA] (ISOFORMS 1 AND 2)</scope>
    <source>
        <tissue>Brain</tissue>
    </source>
</reference>
<reference key="6">
    <citation type="submission" date="2004-10" db="EMBL/GenBank/DDBJ databases">
        <title>Cloning of human full-length CDSs in BD Creator(TM) system donor vector.</title>
        <authorList>
            <person name="Kalnine N."/>
            <person name="Chen X."/>
            <person name="Rolfs A."/>
            <person name="Halleck A."/>
            <person name="Hines L."/>
            <person name="Eisenstein S."/>
            <person name="Koundinya M."/>
            <person name="Raphael J."/>
            <person name="Moreira D."/>
            <person name="Kelley T."/>
            <person name="LaBaer J."/>
            <person name="Lin Y."/>
            <person name="Phelan M."/>
            <person name="Farmer A."/>
        </authorList>
    </citation>
    <scope>NUCLEOTIDE SEQUENCE [LARGE SCALE MRNA] (ISOFORM 1)</scope>
</reference>
<reference key="7">
    <citation type="submission" date="2004-10" db="EMBL/GenBank/DDBJ databases">
        <authorList>
            <consortium name="NIEHS SNPs program"/>
        </authorList>
    </citation>
    <scope>NUCLEOTIDE SEQUENCE [GENOMIC DNA]</scope>
    <scope>VARIANTS HIS-178 AND LEU-179</scope>
</reference>
<reference key="8">
    <citation type="journal article" date="2004" name="Nature">
        <title>The DNA sequence and comparative analysis of human chromosome 5.</title>
        <authorList>
            <person name="Schmutz J."/>
            <person name="Martin J."/>
            <person name="Terry A."/>
            <person name="Couronne O."/>
            <person name="Grimwood J."/>
            <person name="Lowry S."/>
            <person name="Gordon L.A."/>
            <person name="Scott D."/>
            <person name="Xie G."/>
            <person name="Huang W."/>
            <person name="Hellsten U."/>
            <person name="Tran-Gyamfi M."/>
            <person name="She X."/>
            <person name="Prabhakar S."/>
            <person name="Aerts A."/>
            <person name="Altherr M."/>
            <person name="Bajorek E."/>
            <person name="Black S."/>
            <person name="Branscomb E."/>
            <person name="Caoile C."/>
            <person name="Challacombe J.F."/>
            <person name="Chan Y.M."/>
            <person name="Denys M."/>
            <person name="Detter J.C."/>
            <person name="Escobar J."/>
            <person name="Flowers D."/>
            <person name="Fotopulos D."/>
            <person name="Glavina T."/>
            <person name="Gomez M."/>
            <person name="Gonzales E."/>
            <person name="Goodstein D."/>
            <person name="Grigoriev I."/>
            <person name="Groza M."/>
            <person name="Hammon N."/>
            <person name="Hawkins T."/>
            <person name="Haydu L."/>
            <person name="Israni S."/>
            <person name="Jett J."/>
            <person name="Kadner K."/>
            <person name="Kimball H."/>
            <person name="Kobayashi A."/>
            <person name="Lopez F."/>
            <person name="Lou Y."/>
            <person name="Martinez D."/>
            <person name="Medina C."/>
            <person name="Morgan J."/>
            <person name="Nandkeshwar R."/>
            <person name="Noonan J.P."/>
            <person name="Pitluck S."/>
            <person name="Pollard M."/>
            <person name="Predki P."/>
            <person name="Priest J."/>
            <person name="Ramirez L."/>
            <person name="Retterer J."/>
            <person name="Rodriguez A."/>
            <person name="Rogers S."/>
            <person name="Salamov A."/>
            <person name="Salazar A."/>
            <person name="Thayer N."/>
            <person name="Tice H."/>
            <person name="Tsai M."/>
            <person name="Ustaszewska A."/>
            <person name="Vo N."/>
            <person name="Wheeler J."/>
            <person name="Wu K."/>
            <person name="Yang J."/>
            <person name="Dickson M."/>
            <person name="Cheng J.-F."/>
            <person name="Eichler E.E."/>
            <person name="Olsen A."/>
            <person name="Pennacchio L.A."/>
            <person name="Rokhsar D.S."/>
            <person name="Richardson P."/>
            <person name="Lucas S.M."/>
            <person name="Myers R.M."/>
            <person name="Rubin E.M."/>
        </authorList>
    </citation>
    <scope>NUCLEOTIDE SEQUENCE [LARGE SCALE GENOMIC DNA]</scope>
</reference>
<reference key="9">
    <citation type="submission" date="2005-09" db="EMBL/GenBank/DDBJ databases">
        <authorList>
            <person name="Mural R.J."/>
            <person name="Istrail S."/>
            <person name="Sutton G.G."/>
            <person name="Florea L."/>
            <person name="Halpern A.L."/>
            <person name="Mobarry C.M."/>
            <person name="Lippert R."/>
            <person name="Walenz B."/>
            <person name="Shatkay H."/>
            <person name="Dew I."/>
            <person name="Miller J.R."/>
            <person name="Flanigan M.J."/>
            <person name="Edwards N.J."/>
            <person name="Bolanos R."/>
            <person name="Fasulo D."/>
            <person name="Halldorsson B.V."/>
            <person name="Hannenhalli S."/>
            <person name="Turner R."/>
            <person name="Yooseph S."/>
            <person name="Lu F."/>
            <person name="Nusskern D.R."/>
            <person name="Shue B.C."/>
            <person name="Zheng X.H."/>
            <person name="Zhong F."/>
            <person name="Delcher A.L."/>
            <person name="Huson D.H."/>
            <person name="Kravitz S.A."/>
            <person name="Mouchard L."/>
            <person name="Reinert K."/>
            <person name="Remington K.A."/>
            <person name="Clark A.G."/>
            <person name="Waterman M.S."/>
            <person name="Eichler E.E."/>
            <person name="Adams M.D."/>
            <person name="Hunkapiller M.W."/>
            <person name="Myers E.W."/>
            <person name="Venter J.C."/>
        </authorList>
    </citation>
    <scope>NUCLEOTIDE SEQUENCE [LARGE SCALE GENOMIC DNA]</scope>
</reference>
<reference key="10">
    <citation type="journal article" date="2004" name="Genome Res.">
        <title>The status, quality, and expansion of the NIH full-length cDNA project: the Mammalian Gene Collection (MGC).</title>
        <authorList>
            <consortium name="The MGC Project Team"/>
        </authorList>
    </citation>
    <scope>NUCLEOTIDE SEQUENCE [LARGE SCALE MRNA] (ISOFORM 1)</scope>
    <source>
        <tissue>Eye</tissue>
        <tissue>Prostate</tissue>
    </source>
</reference>
<reference key="11">
    <citation type="submission" date="1996-08" db="EMBL/GenBank/DDBJ databases">
        <authorList>
            <person name="Wu L."/>
            <person name="Hall F.L."/>
        </authorList>
    </citation>
    <scope>NUCLEOTIDE SEQUENCE [MRNA] OF 7-295 (ISOFORM 1)</scope>
    <source>
        <tissue>Fibroblast</tissue>
    </source>
</reference>
<keyword id="KW-0025">Alternative splicing</keyword>
<keyword id="KW-0131">Cell cycle</keyword>
<keyword id="KW-0132">Cell division</keyword>
<keyword id="KW-0195">Cyclin</keyword>
<keyword id="KW-0498">Mitosis</keyword>
<keyword id="KW-0539">Nucleus</keyword>
<keyword id="KW-1267">Proteomics identification</keyword>
<keyword id="KW-1185">Reference proteome</keyword>
<organism>
    <name type="scientific">Homo sapiens</name>
    <name type="common">Human</name>
    <dbReference type="NCBI Taxonomy" id="9606"/>
    <lineage>
        <taxon>Eukaryota</taxon>
        <taxon>Metazoa</taxon>
        <taxon>Chordata</taxon>
        <taxon>Craniata</taxon>
        <taxon>Vertebrata</taxon>
        <taxon>Euteleostomi</taxon>
        <taxon>Mammalia</taxon>
        <taxon>Eutheria</taxon>
        <taxon>Euarchontoglires</taxon>
        <taxon>Primates</taxon>
        <taxon>Haplorrhini</taxon>
        <taxon>Catarrhini</taxon>
        <taxon>Hominidae</taxon>
        <taxon>Homo</taxon>
    </lineage>
</organism>
<evidence type="ECO:0000250" key="1"/>
<evidence type="ECO:0000269" key="2">
    <source>
    </source>
</evidence>
<evidence type="ECO:0000269" key="3">
    <source ref="7"/>
</evidence>
<evidence type="ECO:0000303" key="4">
    <source>
    </source>
</evidence>
<evidence type="ECO:0000305" key="5"/>
<sequence length="295" mass="34074">MIEVLTTTDSQKLLHQLNALLEQESRCQPKVCGLRLIESAHDNGLRMTARLRDFEVKDLLSLTQFFGFDTETFSLAVNLLDRFLSKMKVQPKHLGCVGLSCFYLAVKSIEEERNVPLATDLIRISQYRFTVSDLMRMEKIVLEKVCWKVKATTAFQFLQLYYSLLQENLPLERRNSINFERLEAQLKACHCRIIFSKAKPSVLALSIIALEIQAQKCVELTEGIECLQKHSKINGRDLTFWQELVSKCLTEYSSNKCSKPNVQKLKWIVSGRTARQLKHSYYRITHLPTIPEMVP</sequence>